<gene>
    <name type="primary">yitQ</name>
    <name type="ordered locus">BSU11080</name>
</gene>
<name>YITQ_BACSU</name>
<sequence>MNGQLIIDRYMEELNAELANMPDVERENAIDELKGHITAFVQDRIKAGLSEEELQEAVESEFSHPKELAELMMGDGGETKRRRSLLGKSWISVLLIVTIIALPLLPSDFRHLPLAVYLMVLAGYVWKRKKLVMFAGVRKNKMRSQKEIVKISRVGAVYLLFLAVVLLLSPFLNALVVLLLIAVSCAAFFLFLNIK</sequence>
<feature type="chain" id="PRO_0000049588" description="Uncharacterized protein YitQ">
    <location>
        <begin position="1"/>
        <end position="195"/>
    </location>
</feature>
<feature type="transmembrane region" description="Helical" evidence="1">
    <location>
        <begin position="89"/>
        <end position="106"/>
    </location>
</feature>
<feature type="transmembrane region" description="Helical" evidence="1">
    <location>
        <begin position="111"/>
        <end position="128"/>
    </location>
</feature>
<feature type="transmembrane region" description="Helical" evidence="1">
    <location>
        <begin position="149"/>
        <end position="168"/>
    </location>
</feature>
<feature type="transmembrane region" description="Helical" evidence="1">
    <location>
        <begin position="172"/>
        <end position="194"/>
    </location>
</feature>
<organism>
    <name type="scientific">Bacillus subtilis (strain 168)</name>
    <dbReference type="NCBI Taxonomy" id="224308"/>
    <lineage>
        <taxon>Bacteria</taxon>
        <taxon>Bacillati</taxon>
        <taxon>Bacillota</taxon>
        <taxon>Bacilli</taxon>
        <taxon>Bacillales</taxon>
        <taxon>Bacillaceae</taxon>
        <taxon>Bacillus</taxon>
    </lineage>
</organism>
<evidence type="ECO:0000255" key="1"/>
<evidence type="ECO:0000305" key="2"/>
<protein>
    <recommendedName>
        <fullName>Uncharacterized protein YitQ</fullName>
    </recommendedName>
</protein>
<dbReference type="EMBL" id="Y09476">
    <property type="protein sequence ID" value="CAA70626.1"/>
    <property type="status" value="ALT_INIT"/>
    <property type="molecule type" value="Genomic_DNA"/>
</dbReference>
<dbReference type="EMBL" id="AL009126">
    <property type="protein sequence ID" value="CAB12948.2"/>
    <property type="molecule type" value="Genomic_DNA"/>
</dbReference>
<dbReference type="PIR" id="B69841">
    <property type="entry name" value="B69841"/>
</dbReference>
<dbReference type="RefSeq" id="NP_388989.2">
    <property type="nucleotide sequence ID" value="NC_000964.3"/>
</dbReference>
<dbReference type="RefSeq" id="WP_003244996.1">
    <property type="nucleotide sequence ID" value="NZ_OZ025638.1"/>
</dbReference>
<dbReference type="SMR" id="O06752"/>
<dbReference type="FunCoup" id="O06752">
    <property type="interactions" value="18"/>
</dbReference>
<dbReference type="STRING" id="224308.BSU11080"/>
<dbReference type="PaxDb" id="224308-BSU11080"/>
<dbReference type="EnsemblBacteria" id="CAB12948">
    <property type="protein sequence ID" value="CAB12948"/>
    <property type="gene ID" value="BSU_11080"/>
</dbReference>
<dbReference type="GeneID" id="939797"/>
<dbReference type="KEGG" id="bsu:BSU11080"/>
<dbReference type="PATRIC" id="fig|224308.179.peg.1190"/>
<dbReference type="eggNOG" id="ENOG502ZKN3">
    <property type="taxonomic scope" value="Bacteria"/>
</dbReference>
<dbReference type="InParanoid" id="O06752"/>
<dbReference type="OrthoDB" id="7182479at2"/>
<dbReference type="BioCyc" id="BSUB:BSU11080-MONOMER"/>
<dbReference type="Proteomes" id="UP000001570">
    <property type="component" value="Chromosome"/>
</dbReference>
<dbReference type="GO" id="GO:0005886">
    <property type="term" value="C:plasma membrane"/>
    <property type="evidence" value="ECO:0007669"/>
    <property type="project" value="UniProtKB-SubCell"/>
</dbReference>
<dbReference type="Pfam" id="PF22564">
    <property type="entry name" value="HAAS"/>
    <property type="match status" value="1"/>
</dbReference>
<reference key="1">
    <citation type="journal article" date="1997" name="Microbiology">
        <title>A Bacillus subtilis chromosome segment at the 100 degrees to 102 degrees position encoding 11 membrane proteins.</title>
        <authorList>
            <person name="Roche B."/>
            <person name="Autret S."/>
            <person name="Levine A."/>
            <person name="Vannier F."/>
            <person name="Medina N."/>
            <person name="Seror S.J."/>
        </authorList>
    </citation>
    <scope>NUCLEOTIDE SEQUENCE [GENOMIC DNA]</scope>
</reference>
<reference key="2">
    <citation type="journal article" date="1997" name="Nature">
        <title>The complete genome sequence of the Gram-positive bacterium Bacillus subtilis.</title>
        <authorList>
            <person name="Kunst F."/>
            <person name="Ogasawara N."/>
            <person name="Moszer I."/>
            <person name="Albertini A.M."/>
            <person name="Alloni G."/>
            <person name="Azevedo V."/>
            <person name="Bertero M.G."/>
            <person name="Bessieres P."/>
            <person name="Bolotin A."/>
            <person name="Borchert S."/>
            <person name="Borriss R."/>
            <person name="Boursier L."/>
            <person name="Brans A."/>
            <person name="Braun M."/>
            <person name="Brignell S.C."/>
            <person name="Bron S."/>
            <person name="Brouillet S."/>
            <person name="Bruschi C.V."/>
            <person name="Caldwell B."/>
            <person name="Capuano V."/>
            <person name="Carter N.M."/>
            <person name="Choi S.-K."/>
            <person name="Codani J.-J."/>
            <person name="Connerton I.F."/>
            <person name="Cummings N.J."/>
            <person name="Daniel R.A."/>
            <person name="Denizot F."/>
            <person name="Devine K.M."/>
            <person name="Duesterhoeft A."/>
            <person name="Ehrlich S.D."/>
            <person name="Emmerson P.T."/>
            <person name="Entian K.-D."/>
            <person name="Errington J."/>
            <person name="Fabret C."/>
            <person name="Ferrari E."/>
            <person name="Foulger D."/>
            <person name="Fritz C."/>
            <person name="Fujita M."/>
            <person name="Fujita Y."/>
            <person name="Fuma S."/>
            <person name="Galizzi A."/>
            <person name="Galleron N."/>
            <person name="Ghim S.-Y."/>
            <person name="Glaser P."/>
            <person name="Goffeau A."/>
            <person name="Golightly E.J."/>
            <person name="Grandi G."/>
            <person name="Guiseppi G."/>
            <person name="Guy B.J."/>
            <person name="Haga K."/>
            <person name="Haiech J."/>
            <person name="Harwood C.R."/>
            <person name="Henaut A."/>
            <person name="Hilbert H."/>
            <person name="Holsappel S."/>
            <person name="Hosono S."/>
            <person name="Hullo M.-F."/>
            <person name="Itaya M."/>
            <person name="Jones L.-M."/>
            <person name="Joris B."/>
            <person name="Karamata D."/>
            <person name="Kasahara Y."/>
            <person name="Klaerr-Blanchard M."/>
            <person name="Klein C."/>
            <person name="Kobayashi Y."/>
            <person name="Koetter P."/>
            <person name="Koningstein G."/>
            <person name="Krogh S."/>
            <person name="Kumano M."/>
            <person name="Kurita K."/>
            <person name="Lapidus A."/>
            <person name="Lardinois S."/>
            <person name="Lauber J."/>
            <person name="Lazarevic V."/>
            <person name="Lee S.-M."/>
            <person name="Levine A."/>
            <person name="Liu H."/>
            <person name="Masuda S."/>
            <person name="Mauel C."/>
            <person name="Medigue C."/>
            <person name="Medina N."/>
            <person name="Mellado R.P."/>
            <person name="Mizuno M."/>
            <person name="Moestl D."/>
            <person name="Nakai S."/>
            <person name="Noback M."/>
            <person name="Noone D."/>
            <person name="O'Reilly M."/>
            <person name="Ogawa K."/>
            <person name="Ogiwara A."/>
            <person name="Oudega B."/>
            <person name="Park S.-H."/>
            <person name="Parro V."/>
            <person name="Pohl T.M."/>
            <person name="Portetelle D."/>
            <person name="Porwollik S."/>
            <person name="Prescott A.M."/>
            <person name="Presecan E."/>
            <person name="Pujic P."/>
            <person name="Purnelle B."/>
            <person name="Rapoport G."/>
            <person name="Rey M."/>
            <person name="Reynolds S."/>
            <person name="Rieger M."/>
            <person name="Rivolta C."/>
            <person name="Rocha E."/>
            <person name="Roche B."/>
            <person name="Rose M."/>
            <person name="Sadaie Y."/>
            <person name="Sato T."/>
            <person name="Scanlan E."/>
            <person name="Schleich S."/>
            <person name="Schroeter R."/>
            <person name="Scoffone F."/>
            <person name="Sekiguchi J."/>
            <person name="Sekowska A."/>
            <person name="Seror S.J."/>
            <person name="Serror P."/>
            <person name="Shin B.-S."/>
            <person name="Soldo B."/>
            <person name="Sorokin A."/>
            <person name="Tacconi E."/>
            <person name="Takagi T."/>
            <person name="Takahashi H."/>
            <person name="Takemaru K."/>
            <person name="Takeuchi M."/>
            <person name="Tamakoshi A."/>
            <person name="Tanaka T."/>
            <person name="Terpstra P."/>
            <person name="Tognoni A."/>
            <person name="Tosato V."/>
            <person name="Uchiyama S."/>
            <person name="Vandenbol M."/>
            <person name="Vannier F."/>
            <person name="Vassarotti A."/>
            <person name="Viari A."/>
            <person name="Wambutt R."/>
            <person name="Wedler E."/>
            <person name="Wedler H."/>
            <person name="Weitzenegger T."/>
            <person name="Winters P."/>
            <person name="Wipat A."/>
            <person name="Yamamoto H."/>
            <person name="Yamane K."/>
            <person name="Yasumoto K."/>
            <person name="Yata K."/>
            <person name="Yoshida K."/>
            <person name="Yoshikawa H.-F."/>
            <person name="Zumstein E."/>
            <person name="Yoshikawa H."/>
            <person name="Danchin A."/>
        </authorList>
    </citation>
    <scope>NUCLEOTIDE SEQUENCE [LARGE SCALE GENOMIC DNA]</scope>
    <source>
        <strain>168</strain>
    </source>
</reference>
<accession>O06752</accession>
<comment type="subcellular location">
    <subcellularLocation>
        <location evidence="2">Cell membrane</location>
        <topology evidence="2">Multi-pass membrane protein</topology>
    </subcellularLocation>
</comment>
<comment type="sequence caution" evidence="2">
    <conflict type="erroneous initiation">
        <sequence resource="EMBL-CDS" id="CAA70626"/>
    </conflict>
</comment>
<proteinExistence type="predicted"/>
<keyword id="KW-1003">Cell membrane</keyword>
<keyword id="KW-0472">Membrane</keyword>
<keyword id="KW-1185">Reference proteome</keyword>
<keyword id="KW-0812">Transmembrane</keyword>
<keyword id="KW-1133">Transmembrane helix</keyword>